<evidence type="ECO:0000255" key="1">
    <source>
        <dbReference type="HAMAP-Rule" id="MF_00046"/>
    </source>
</evidence>
<keyword id="KW-0067">ATP-binding</keyword>
<keyword id="KW-0131">Cell cycle</keyword>
<keyword id="KW-0132">Cell division</keyword>
<keyword id="KW-0133">Cell shape</keyword>
<keyword id="KW-0961">Cell wall biogenesis/degradation</keyword>
<keyword id="KW-0963">Cytoplasm</keyword>
<keyword id="KW-0436">Ligase</keyword>
<keyword id="KW-0547">Nucleotide-binding</keyword>
<keyword id="KW-0573">Peptidoglycan synthesis</keyword>
<keyword id="KW-1185">Reference proteome</keyword>
<organism>
    <name type="scientific">Geobacillus kaustophilus (strain HTA426)</name>
    <dbReference type="NCBI Taxonomy" id="235909"/>
    <lineage>
        <taxon>Bacteria</taxon>
        <taxon>Bacillati</taxon>
        <taxon>Bacillota</taxon>
        <taxon>Bacilli</taxon>
        <taxon>Bacillales</taxon>
        <taxon>Anoxybacillaceae</taxon>
        <taxon>Geobacillus</taxon>
        <taxon>Geobacillus thermoleovorans group</taxon>
    </lineage>
</organism>
<sequence length="434" mass="48567">MTAYHFVGIKGTGMSALAQVLHDLGYTVQGSDVEKWFFTQKALEERGIPVLPFSKDNIRPGYTVIAGNAFPDTHEEIEAARQLGVPVIRYHRFLGQLAGKFTSIAVTGSHGKTTTTGLLAHVMQGAHPTSYLIGDGTGKGEPGSKYFVFEACEYRRHFLSYFPDYAIMTNIDFDHPDYFANVDDVFSAFQQMANQVKKAIVACGDDPYLPNIQAKVPILFYGFGEENDFQARNIVKTTEGMAFDVFVRNTFFASFAIPRFGTHNVLNALAVIALCHYEGVDAGTIAKRLQTFQGVKRRFSEKTVGRQVLIDDYAHHPREITATLEAARQKYPGREVVAIFQPHTYTRTQTFLREFAESLLQADHVYLCDIFGSAREHEGKLTIRDLQAQIPRSQLLEEQNVAVLKQHQDAVLVFMGAGDIQKFQQAYERAVLSA</sequence>
<comment type="function">
    <text evidence="1">Cell wall formation.</text>
</comment>
<comment type="catalytic activity">
    <reaction evidence="1">
        <text>UDP-N-acetyl-alpha-D-muramate + L-alanine + ATP = UDP-N-acetyl-alpha-D-muramoyl-L-alanine + ADP + phosphate + H(+)</text>
        <dbReference type="Rhea" id="RHEA:23372"/>
        <dbReference type="ChEBI" id="CHEBI:15378"/>
        <dbReference type="ChEBI" id="CHEBI:30616"/>
        <dbReference type="ChEBI" id="CHEBI:43474"/>
        <dbReference type="ChEBI" id="CHEBI:57972"/>
        <dbReference type="ChEBI" id="CHEBI:70757"/>
        <dbReference type="ChEBI" id="CHEBI:83898"/>
        <dbReference type="ChEBI" id="CHEBI:456216"/>
        <dbReference type="EC" id="6.3.2.8"/>
    </reaction>
</comment>
<comment type="pathway">
    <text evidence="1">Cell wall biogenesis; peptidoglycan biosynthesis.</text>
</comment>
<comment type="subcellular location">
    <subcellularLocation>
        <location evidence="1">Cytoplasm</location>
    </subcellularLocation>
</comment>
<comment type="similarity">
    <text evidence="1">Belongs to the MurCDEF family.</text>
</comment>
<accession>Q5KW36</accession>
<protein>
    <recommendedName>
        <fullName evidence="1">UDP-N-acetylmuramate--L-alanine ligase</fullName>
        <ecNumber evidence="1">6.3.2.8</ecNumber>
    </recommendedName>
    <alternativeName>
        <fullName evidence="1">UDP-N-acetylmuramoyl-L-alanine synthetase</fullName>
    </alternativeName>
</protein>
<gene>
    <name evidence="1" type="primary">murC</name>
    <name type="ordered locus">GK2815</name>
</gene>
<name>MURC_GEOKA</name>
<dbReference type="EC" id="6.3.2.8" evidence="1"/>
<dbReference type="EMBL" id="BA000043">
    <property type="protein sequence ID" value="BAD77100.1"/>
    <property type="molecule type" value="Genomic_DNA"/>
</dbReference>
<dbReference type="RefSeq" id="WP_011232289.1">
    <property type="nucleotide sequence ID" value="NC_006510.1"/>
</dbReference>
<dbReference type="SMR" id="Q5KW36"/>
<dbReference type="STRING" id="235909.GK2815"/>
<dbReference type="GeneID" id="32064708"/>
<dbReference type="KEGG" id="gka:GK2815"/>
<dbReference type="eggNOG" id="COG0773">
    <property type="taxonomic scope" value="Bacteria"/>
</dbReference>
<dbReference type="HOGENOM" id="CLU_028104_1_0_9"/>
<dbReference type="UniPathway" id="UPA00219"/>
<dbReference type="Proteomes" id="UP000001172">
    <property type="component" value="Chromosome"/>
</dbReference>
<dbReference type="GO" id="GO:0005737">
    <property type="term" value="C:cytoplasm"/>
    <property type="evidence" value="ECO:0007669"/>
    <property type="project" value="UniProtKB-SubCell"/>
</dbReference>
<dbReference type="GO" id="GO:0005524">
    <property type="term" value="F:ATP binding"/>
    <property type="evidence" value="ECO:0007669"/>
    <property type="project" value="UniProtKB-UniRule"/>
</dbReference>
<dbReference type="GO" id="GO:0008763">
    <property type="term" value="F:UDP-N-acetylmuramate-L-alanine ligase activity"/>
    <property type="evidence" value="ECO:0007669"/>
    <property type="project" value="UniProtKB-UniRule"/>
</dbReference>
<dbReference type="GO" id="GO:0051301">
    <property type="term" value="P:cell division"/>
    <property type="evidence" value="ECO:0007669"/>
    <property type="project" value="UniProtKB-KW"/>
</dbReference>
<dbReference type="GO" id="GO:0071555">
    <property type="term" value="P:cell wall organization"/>
    <property type="evidence" value="ECO:0007669"/>
    <property type="project" value="UniProtKB-KW"/>
</dbReference>
<dbReference type="GO" id="GO:0009252">
    <property type="term" value="P:peptidoglycan biosynthetic process"/>
    <property type="evidence" value="ECO:0007669"/>
    <property type="project" value="UniProtKB-UniRule"/>
</dbReference>
<dbReference type="GO" id="GO:0008360">
    <property type="term" value="P:regulation of cell shape"/>
    <property type="evidence" value="ECO:0007669"/>
    <property type="project" value="UniProtKB-KW"/>
</dbReference>
<dbReference type="Gene3D" id="3.90.190.20">
    <property type="entry name" value="Mur ligase, C-terminal domain"/>
    <property type="match status" value="1"/>
</dbReference>
<dbReference type="Gene3D" id="3.40.1190.10">
    <property type="entry name" value="Mur-like, catalytic domain"/>
    <property type="match status" value="1"/>
</dbReference>
<dbReference type="Gene3D" id="3.40.50.720">
    <property type="entry name" value="NAD(P)-binding Rossmann-like Domain"/>
    <property type="match status" value="1"/>
</dbReference>
<dbReference type="HAMAP" id="MF_00046">
    <property type="entry name" value="MurC"/>
    <property type="match status" value="1"/>
</dbReference>
<dbReference type="InterPro" id="IPR036565">
    <property type="entry name" value="Mur-like_cat_sf"/>
</dbReference>
<dbReference type="InterPro" id="IPR004101">
    <property type="entry name" value="Mur_ligase_C"/>
</dbReference>
<dbReference type="InterPro" id="IPR036615">
    <property type="entry name" value="Mur_ligase_C_dom_sf"/>
</dbReference>
<dbReference type="InterPro" id="IPR013221">
    <property type="entry name" value="Mur_ligase_cen"/>
</dbReference>
<dbReference type="InterPro" id="IPR000713">
    <property type="entry name" value="Mur_ligase_N"/>
</dbReference>
<dbReference type="InterPro" id="IPR050061">
    <property type="entry name" value="MurCDEF_pg_biosynth"/>
</dbReference>
<dbReference type="InterPro" id="IPR005758">
    <property type="entry name" value="UDP-N-AcMur_Ala_ligase_MurC"/>
</dbReference>
<dbReference type="NCBIfam" id="TIGR01082">
    <property type="entry name" value="murC"/>
    <property type="match status" value="1"/>
</dbReference>
<dbReference type="PANTHER" id="PTHR43445:SF3">
    <property type="entry name" value="UDP-N-ACETYLMURAMATE--L-ALANINE LIGASE"/>
    <property type="match status" value="1"/>
</dbReference>
<dbReference type="PANTHER" id="PTHR43445">
    <property type="entry name" value="UDP-N-ACETYLMURAMATE--L-ALANINE LIGASE-RELATED"/>
    <property type="match status" value="1"/>
</dbReference>
<dbReference type="Pfam" id="PF01225">
    <property type="entry name" value="Mur_ligase"/>
    <property type="match status" value="1"/>
</dbReference>
<dbReference type="Pfam" id="PF02875">
    <property type="entry name" value="Mur_ligase_C"/>
    <property type="match status" value="1"/>
</dbReference>
<dbReference type="Pfam" id="PF08245">
    <property type="entry name" value="Mur_ligase_M"/>
    <property type="match status" value="1"/>
</dbReference>
<dbReference type="SUPFAM" id="SSF51984">
    <property type="entry name" value="MurCD N-terminal domain"/>
    <property type="match status" value="1"/>
</dbReference>
<dbReference type="SUPFAM" id="SSF53623">
    <property type="entry name" value="MurD-like peptide ligases, catalytic domain"/>
    <property type="match status" value="1"/>
</dbReference>
<dbReference type="SUPFAM" id="SSF53244">
    <property type="entry name" value="MurD-like peptide ligases, peptide-binding domain"/>
    <property type="match status" value="1"/>
</dbReference>
<proteinExistence type="inferred from homology"/>
<feature type="chain" id="PRO_0000182096" description="UDP-N-acetylmuramate--L-alanine ligase">
    <location>
        <begin position="1"/>
        <end position="434"/>
    </location>
</feature>
<feature type="binding site" evidence="1">
    <location>
        <begin position="108"/>
        <end position="114"/>
    </location>
    <ligand>
        <name>ATP</name>
        <dbReference type="ChEBI" id="CHEBI:30616"/>
    </ligand>
</feature>
<reference key="1">
    <citation type="journal article" date="2004" name="Nucleic Acids Res.">
        <title>Thermoadaptation trait revealed by the genome sequence of thermophilic Geobacillus kaustophilus.</title>
        <authorList>
            <person name="Takami H."/>
            <person name="Takaki Y."/>
            <person name="Chee G.-J."/>
            <person name="Nishi S."/>
            <person name="Shimamura S."/>
            <person name="Suzuki H."/>
            <person name="Matsui S."/>
            <person name="Uchiyama I."/>
        </authorList>
    </citation>
    <scope>NUCLEOTIDE SEQUENCE [LARGE SCALE GENOMIC DNA]</scope>
    <source>
        <strain>HTA426</strain>
    </source>
</reference>